<proteinExistence type="inferred from homology"/>
<evidence type="ECO:0000255" key="1">
    <source>
        <dbReference type="HAMAP-Rule" id="MF_00368"/>
    </source>
</evidence>
<evidence type="ECO:0000305" key="2"/>
<name>RL7_SULDN</name>
<accession>Q30TP8</accession>
<protein>
    <recommendedName>
        <fullName evidence="1">Large ribosomal subunit protein bL12</fullName>
    </recommendedName>
    <alternativeName>
        <fullName evidence="2">50S ribosomal protein L7/L12</fullName>
    </alternativeName>
</protein>
<organism>
    <name type="scientific">Sulfurimonas denitrificans (strain ATCC 33889 / DSM 1251)</name>
    <name type="common">Thiomicrospira denitrificans (strain ATCC 33889 / DSM 1251)</name>
    <dbReference type="NCBI Taxonomy" id="326298"/>
    <lineage>
        <taxon>Bacteria</taxon>
        <taxon>Pseudomonadati</taxon>
        <taxon>Campylobacterota</taxon>
        <taxon>Epsilonproteobacteria</taxon>
        <taxon>Campylobacterales</taxon>
        <taxon>Sulfurimonadaceae</taxon>
        <taxon>Sulfurimonas</taxon>
    </lineage>
</organism>
<feature type="chain" id="PRO_0000243521" description="Large ribosomal subunit protein bL12">
    <location>
        <begin position="1"/>
        <end position="122"/>
    </location>
</feature>
<keyword id="KW-1185">Reference proteome</keyword>
<keyword id="KW-0687">Ribonucleoprotein</keyword>
<keyword id="KW-0689">Ribosomal protein</keyword>
<sequence>MAITKQDVLEFISGLSVLELSELVKEFEEKFGVSAQPVAVAGGAVAAVAVEEQTEFNVIITDAGDKKINVIKVVRALTGLGLKEAKDATENVPSTIKEGVDKETAMNAKKELEEAGAKVEVK</sequence>
<comment type="function">
    <text evidence="1">Forms part of the ribosomal stalk which helps the ribosome interact with GTP-bound translation factors. Is thus essential for accurate translation.</text>
</comment>
<comment type="subunit">
    <text evidence="1">Homodimer. Part of the ribosomal stalk of the 50S ribosomal subunit. Forms a multimeric L10(L12)X complex, where L10 forms an elongated spine to which 2 to 4 L12 dimers bind in a sequential fashion. Binds GTP-bound translation factors.</text>
</comment>
<comment type="similarity">
    <text evidence="1">Belongs to the bacterial ribosomal protein bL12 family.</text>
</comment>
<dbReference type="EMBL" id="CP000153">
    <property type="protein sequence ID" value="ABB43633.1"/>
    <property type="molecule type" value="Genomic_DNA"/>
</dbReference>
<dbReference type="RefSeq" id="WP_011371987.1">
    <property type="nucleotide sequence ID" value="NC_007575.1"/>
</dbReference>
<dbReference type="SMR" id="Q30TP8"/>
<dbReference type="STRING" id="326298.Suden_0352"/>
<dbReference type="KEGG" id="tdn:Suden_0352"/>
<dbReference type="eggNOG" id="COG0222">
    <property type="taxonomic scope" value="Bacteria"/>
</dbReference>
<dbReference type="HOGENOM" id="CLU_086499_3_0_7"/>
<dbReference type="OrthoDB" id="9811748at2"/>
<dbReference type="Proteomes" id="UP000002714">
    <property type="component" value="Chromosome"/>
</dbReference>
<dbReference type="GO" id="GO:0022625">
    <property type="term" value="C:cytosolic large ribosomal subunit"/>
    <property type="evidence" value="ECO:0007669"/>
    <property type="project" value="TreeGrafter"/>
</dbReference>
<dbReference type="GO" id="GO:0003729">
    <property type="term" value="F:mRNA binding"/>
    <property type="evidence" value="ECO:0007669"/>
    <property type="project" value="TreeGrafter"/>
</dbReference>
<dbReference type="GO" id="GO:0003735">
    <property type="term" value="F:structural constituent of ribosome"/>
    <property type="evidence" value="ECO:0007669"/>
    <property type="project" value="InterPro"/>
</dbReference>
<dbReference type="GO" id="GO:0006412">
    <property type="term" value="P:translation"/>
    <property type="evidence" value="ECO:0007669"/>
    <property type="project" value="UniProtKB-UniRule"/>
</dbReference>
<dbReference type="CDD" id="cd00387">
    <property type="entry name" value="Ribosomal_L7_L12"/>
    <property type="match status" value="1"/>
</dbReference>
<dbReference type="FunFam" id="3.30.1390.10:FF:000001">
    <property type="entry name" value="50S ribosomal protein L7/L12"/>
    <property type="match status" value="1"/>
</dbReference>
<dbReference type="Gene3D" id="3.30.1390.10">
    <property type="match status" value="1"/>
</dbReference>
<dbReference type="Gene3D" id="1.20.5.710">
    <property type="entry name" value="Single helix bin"/>
    <property type="match status" value="1"/>
</dbReference>
<dbReference type="HAMAP" id="MF_00368">
    <property type="entry name" value="Ribosomal_bL12"/>
    <property type="match status" value="1"/>
</dbReference>
<dbReference type="InterPro" id="IPR000206">
    <property type="entry name" value="Ribosomal_bL12"/>
</dbReference>
<dbReference type="InterPro" id="IPR013823">
    <property type="entry name" value="Ribosomal_bL12_C"/>
</dbReference>
<dbReference type="InterPro" id="IPR014719">
    <property type="entry name" value="Ribosomal_bL12_C/ClpS-like"/>
</dbReference>
<dbReference type="InterPro" id="IPR008932">
    <property type="entry name" value="Ribosomal_bL12_oligo"/>
</dbReference>
<dbReference type="InterPro" id="IPR036235">
    <property type="entry name" value="Ribosomal_bL12_oligo_N_sf"/>
</dbReference>
<dbReference type="NCBIfam" id="TIGR00855">
    <property type="entry name" value="L12"/>
    <property type="match status" value="1"/>
</dbReference>
<dbReference type="PANTHER" id="PTHR45987">
    <property type="entry name" value="39S RIBOSOMAL PROTEIN L12"/>
    <property type="match status" value="1"/>
</dbReference>
<dbReference type="PANTHER" id="PTHR45987:SF4">
    <property type="entry name" value="LARGE RIBOSOMAL SUBUNIT PROTEIN BL12M"/>
    <property type="match status" value="1"/>
</dbReference>
<dbReference type="Pfam" id="PF00542">
    <property type="entry name" value="Ribosomal_L12"/>
    <property type="match status" value="1"/>
</dbReference>
<dbReference type="Pfam" id="PF16320">
    <property type="entry name" value="Ribosomal_L12_N"/>
    <property type="match status" value="1"/>
</dbReference>
<dbReference type="SUPFAM" id="SSF54736">
    <property type="entry name" value="ClpS-like"/>
    <property type="match status" value="1"/>
</dbReference>
<dbReference type="SUPFAM" id="SSF48300">
    <property type="entry name" value="Ribosomal protein L7/12, oligomerisation (N-terminal) domain"/>
    <property type="match status" value="1"/>
</dbReference>
<gene>
    <name evidence="1" type="primary">rplL</name>
    <name type="ordered locus">Suden_0352</name>
</gene>
<reference key="1">
    <citation type="journal article" date="2008" name="Appl. Environ. Microbiol.">
        <title>Genome of the epsilonproteobacterial chemolithoautotroph Sulfurimonas denitrificans.</title>
        <authorList>
            <person name="Sievert S.M."/>
            <person name="Scott K.M."/>
            <person name="Klotz M.G."/>
            <person name="Chain P.S.G."/>
            <person name="Hauser L.J."/>
            <person name="Hemp J."/>
            <person name="Huegler M."/>
            <person name="Land M."/>
            <person name="Lapidus A."/>
            <person name="Larimer F.W."/>
            <person name="Lucas S."/>
            <person name="Malfatti S.A."/>
            <person name="Meyer F."/>
            <person name="Paulsen I.T."/>
            <person name="Ren Q."/>
            <person name="Simon J."/>
            <person name="Bailey K."/>
            <person name="Diaz E."/>
            <person name="Fitzpatrick K.A."/>
            <person name="Glover B."/>
            <person name="Gwatney N."/>
            <person name="Korajkic A."/>
            <person name="Long A."/>
            <person name="Mobberley J.M."/>
            <person name="Pantry S.N."/>
            <person name="Pazder G."/>
            <person name="Peterson S."/>
            <person name="Quintanilla J.D."/>
            <person name="Sprinkle R."/>
            <person name="Stephens J."/>
            <person name="Thomas P."/>
            <person name="Vaughn R."/>
            <person name="Weber M.J."/>
            <person name="Wooten L.L."/>
        </authorList>
    </citation>
    <scope>NUCLEOTIDE SEQUENCE [LARGE SCALE GENOMIC DNA]</scope>
    <source>
        <strain>ATCC 33889 / DSM 1251</strain>
    </source>
</reference>